<comment type="function">
    <text evidence="1">One of the primary rRNA binding proteins, it binds directly to 16S rRNA where it nucleates assembly of the body of the 30S subunit.</text>
</comment>
<comment type="function">
    <text evidence="1">With S5 and S12 plays an important role in translational accuracy.</text>
</comment>
<comment type="subunit">
    <text evidence="1">Part of the 30S ribosomal subunit. Contacts protein S5. The interaction surface between S4 and S5 is involved in control of translational fidelity (By similarity).</text>
</comment>
<comment type="subcellular location">
    <subcellularLocation>
        <location>Plastid</location>
        <location>Chloroplast</location>
    </subcellularLocation>
</comment>
<comment type="similarity">
    <text evidence="2">Belongs to the universal ribosomal protein uS4 family.</text>
</comment>
<keyword id="KW-0150">Chloroplast</keyword>
<keyword id="KW-0934">Plastid</keyword>
<keyword id="KW-0687">Ribonucleoprotein</keyword>
<keyword id="KW-0689">Ribosomal protein</keyword>
<keyword id="KW-0694">RNA-binding</keyword>
<keyword id="KW-0699">rRNA-binding</keyword>
<dbReference type="EMBL" id="AJ250457">
    <property type="protein sequence ID" value="CAC80756.1"/>
    <property type="molecule type" value="Genomic_DNA"/>
</dbReference>
<dbReference type="SMR" id="P59140"/>
<dbReference type="GO" id="GO:0009507">
    <property type="term" value="C:chloroplast"/>
    <property type="evidence" value="ECO:0007669"/>
    <property type="project" value="UniProtKB-SubCell"/>
</dbReference>
<dbReference type="GO" id="GO:0015935">
    <property type="term" value="C:small ribosomal subunit"/>
    <property type="evidence" value="ECO:0007669"/>
    <property type="project" value="InterPro"/>
</dbReference>
<dbReference type="GO" id="GO:0019843">
    <property type="term" value="F:rRNA binding"/>
    <property type="evidence" value="ECO:0007669"/>
    <property type="project" value="UniProtKB-UniRule"/>
</dbReference>
<dbReference type="GO" id="GO:0003735">
    <property type="term" value="F:structural constituent of ribosome"/>
    <property type="evidence" value="ECO:0007669"/>
    <property type="project" value="InterPro"/>
</dbReference>
<dbReference type="GO" id="GO:0042274">
    <property type="term" value="P:ribosomal small subunit biogenesis"/>
    <property type="evidence" value="ECO:0007669"/>
    <property type="project" value="TreeGrafter"/>
</dbReference>
<dbReference type="GO" id="GO:0006412">
    <property type="term" value="P:translation"/>
    <property type="evidence" value="ECO:0007669"/>
    <property type="project" value="UniProtKB-UniRule"/>
</dbReference>
<dbReference type="CDD" id="cd00165">
    <property type="entry name" value="S4"/>
    <property type="match status" value="1"/>
</dbReference>
<dbReference type="FunFam" id="1.10.1050.10:FF:000002">
    <property type="entry name" value="30S ribosomal protein S4, chloroplastic"/>
    <property type="match status" value="1"/>
</dbReference>
<dbReference type="FunFam" id="3.10.290.10:FF:000081">
    <property type="entry name" value="30S ribosomal protein S4, chloroplastic"/>
    <property type="match status" value="1"/>
</dbReference>
<dbReference type="Gene3D" id="1.10.1050.10">
    <property type="entry name" value="Ribosomal Protein S4 Delta 41, Chain A, domain 1"/>
    <property type="match status" value="1"/>
</dbReference>
<dbReference type="Gene3D" id="3.10.290.10">
    <property type="entry name" value="RNA-binding S4 domain"/>
    <property type="match status" value="1"/>
</dbReference>
<dbReference type="HAMAP" id="MF_01306_B">
    <property type="entry name" value="Ribosomal_uS4_B"/>
    <property type="match status" value="1"/>
</dbReference>
<dbReference type="InterPro" id="IPR022801">
    <property type="entry name" value="Ribosomal_uS4"/>
</dbReference>
<dbReference type="InterPro" id="IPR005709">
    <property type="entry name" value="Ribosomal_uS4_bac-type"/>
</dbReference>
<dbReference type="InterPro" id="IPR018079">
    <property type="entry name" value="Ribosomal_uS4_CS"/>
</dbReference>
<dbReference type="InterPro" id="IPR001912">
    <property type="entry name" value="Ribosomal_uS4_N"/>
</dbReference>
<dbReference type="InterPro" id="IPR002942">
    <property type="entry name" value="S4_RNA-bd"/>
</dbReference>
<dbReference type="InterPro" id="IPR036986">
    <property type="entry name" value="S4_RNA-bd_sf"/>
</dbReference>
<dbReference type="NCBIfam" id="NF003717">
    <property type="entry name" value="PRK05327.1"/>
    <property type="match status" value="1"/>
</dbReference>
<dbReference type="NCBIfam" id="TIGR01017">
    <property type="entry name" value="rpsD_bact"/>
    <property type="match status" value="1"/>
</dbReference>
<dbReference type="PANTHER" id="PTHR11831">
    <property type="entry name" value="30S 40S RIBOSOMAL PROTEIN"/>
    <property type="match status" value="1"/>
</dbReference>
<dbReference type="PANTHER" id="PTHR11831:SF4">
    <property type="entry name" value="SMALL RIBOSOMAL SUBUNIT PROTEIN US4M"/>
    <property type="match status" value="1"/>
</dbReference>
<dbReference type="Pfam" id="PF00163">
    <property type="entry name" value="Ribosomal_S4"/>
    <property type="match status" value="1"/>
</dbReference>
<dbReference type="Pfam" id="PF01479">
    <property type="entry name" value="S4"/>
    <property type="match status" value="1"/>
</dbReference>
<dbReference type="SMART" id="SM01390">
    <property type="entry name" value="Ribosomal_S4"/>
    <property type="match status" value="1"/>
</dbReference>
<dbReference type="SMART" id="SM00363">
    <property type="entry name" value="S4"/>
    <property type="match status" value="1"/>
</dbReference>
<dbReference type="SUPFAM" id="SSF55174">
    <property type="entry name" value="Alpha-L RNA-binding motif"/>
    <property type="match status" value="1"/>
</dbReference>
<dbReference type="PROSITE" id="PS00632">
    <property type="entry name" value="RIBOSOMAL_S4"/>
    <property type="match status" value="1"/>
</dbReference>
<dbReference type="PROSITE" id="PS50889">
    <property type="entry name" value="S4"/>
    <property type="match status" value="1"/>
</dbReference>
<geneLocation type="chloroplast"/>
<organism>
    <name type="scientific">Hylocomium splendens</name>
    <name type="common">Glittering wood-moss</name>
    <name type="synonym">Hypnum splendens</name>
    <dbReference type="NCBI Taxonomy" id="53007"/>
    <lineage>
        <taxon>Eukaryota</taxon>
        <taxon>Viridiplantae</taxon>
        <taxon>Streptophyta</taxon>
        <taxon>Embryophyta</taxon>
        <taxon>Bryophyta</taxon>
        <taxon>Bryophytina</taxon>
        <taxon>Bryopsida</taxon>
        <taxon>Bryidae</taxon>
        <taxon>Hypnanae</taxon>
        <taxon>Hypnales</taxon>
        <taxon>Hylocomiaceae</taxon>
        <taxon>Hylocomium</taxon>
    </lineage>
</organism>
<evidence type="ECO:0000250" key="1"/>
<evidence type="ECO:0000305" key="2"/>
<name>RR4_HYLSP</name>
<protein>
    <recommendedName>
        <fullName evidence="2">Small ribosomal subunit protein uS4c</fullName>
    </recommendedName>
    <alternativeName>
        <fullName>30S ribosomal protein S4, chloroplastic</fullName>
    </alternativeName>
</protein>
<feature type="chain" id="PRO_0000132603" description="Small ribosomal subunit protein uS4c">
    <location>
        <begin position="1"/>
        <end position="202"/>
    </location>
</feature>
<feature type="domain" description="S4 RNA-binding">
    <location>
        <begin position="90"/>
        <end position="153"/>
    </location>
</feature>
<sequence length="202" mass="23613">MSRYRGPRVRIIRRLGTLPGLTNKTPQLKSGSINQSTSNKKISQYRIRLEEKQKLRFHYGITERQLLNYVRIARRAKGSTGEVLLQLLEMRLDNVIFRLGMAPTIPGARQLVNHRHILVNDYIVDIPSYRCKPQDFITIKNQQKSETIISKNIEFYQKYKIPNHLTYSSLEKKGLVNQILDRESIGLKINELLVVEYYSRQA</sequence>
<reference key="1">
    <citation type="journal article" date="2002" name="Cryptogam. Bryol.">
        <title>The systematic position of the Hypoptergiaceae (Bryopsida) inferred from rps4 gene sequences.</title>
        <authorList>
            <person name="Bloecher R."/>
            <person name="Capesius I."/>
        </authorList>
    </citation>
    <scope>NUCLEOTIDE SEQUENCE [GENOMIC DNA]</scope>
    <source>
        <tissue>Gametophyte</tissue>
    </source>
</reference>
<proteinExistence type="inferred from homology"/>
<accession>P59140</accession>
<gene>
    <name type="primary">rps4</name>
</gene>